<comment type="function">
    <text evidence="1">Provides the (R)-glutamate required for cell wall biosynthesis.</text>
</comment>
<comment type="catalytic activity">
    <reaction evidence="1">
        <text>L-glutamate = D-glutamate</text>
        <dbReference type="Rhea" id="RHEA:12813"/>
        <dbReference type="ChEBI" id="CHEBI:29985"/>
        <dbReference type="ChEBI" id="CHEBI:29986"/>
        <dbReference type="EC" id="5.1.1.3"/>
    </reaction>
</comment>
<comment type="pathway">
    <text evidence="1">Cell wall biogenesis; peptidoglycan biosynthesis.</text>
</comment>
<comment type="similarity">
    <text evidence="1">Belongs to the aspartate/glutamate racemases family.</text>
</comment>
<dbReference type="EC" id="5.1.1.3" evidence="1"/>
<dbReference type="EMBL" id="CP000262">
    <property type="protein sequence ID" value="ABF37247.1"/>
    <property type="molecule type" value="Genomic_DNA"/>
</dbReference>
<dbReference type="SMR" id="Q1J8B4"/>
<dbReference type="KEGG" id="spi:MGAS10750_Spy0297"/>
<dbReference type="HOGENOM" id="CLU_052344_0_2_9"/>
<dbReference type="UniPathway" id="UPA00219"/>
<dbReference type="Proteomes" id="UP000002434">
    <property type="component" value="Chromosome"/>
</dbReference>
<dbReference type="GO" id="GO:0008881">
    <property type="term" value="F:glutamate racemase activity"/>
    <property type="evidence" value="ECO:0007669"/>
    <property type="project" value="UniProtKB-UniRule"/>
</dbReference>
<dbReference type="GO" id="GO:0071555">
    <property type="term" value="P:cell wall organization"/>
    <property type="evidence" value="ECO:0007669"/>
    <property type="project" value="UniProtKB-KW"/>
</dbReference>
<dbReference type="GO" id="GO:0009252">
    <property type="term" value="P:peptidoglycan biosynthetic process"/>
    <property type="evidence" value="ECO:0007669"/>
    <property type="project" value="UniProtKB-UniRule"/>
</dbReference>
<dbReference type="GO" id="GO:0008360">
    <property type="term" value="P:regulation of cell shape"/>
    <property type="evidence" value="ECO:0007669"/>
    <property type="project" value="UniProtKB-KW"/>
</dbReference>
<dbReference type="FunFam" id="3.40.50.1860:FF:000002">
    <property type="entry name" value="Glutamate racemase"/>
    <property type="match status" value="1"/>
</dbReference>
<dbReference type="Gene3D" id="3.40.50.1860">
    <property type="match status" value="2"/>
</dbReference>
<dbReference type="HAMAP" id="MF_00258">
    <property type="entry name" value="Glu_racemase"/>
    <property type="match status" value="1"/>
</dbReference>
<dbReference type="InterPro" id="IPR015942">
    <property type="entry name" value="Asp/Glu/hydantoin_racemase"/>
</dbReference>
<dbReference type="InterPro" id="IPR001920">
    <property type="entry name" value="Asp/Glu_race"/>
</dbReference>
<dbReference type="InterPro" id="IPR033134">
    <property type="entry name" value="Asp/Glu_racemase_AS_2"/>
</dbReference>
<dbReference type="InterPro" id="IPR004391">
    <property type="entry name" value="Glu_race"/>
</dbReference>
<dbReference type="NCBIfam" id="TIGR00067">
    <property type="entry name" value="glut_race"/>
    <property type="match status" value="1"/>
</dbReference>
<dbReference type="NCBIfam" id="NF002035">
    <property type="entry name" value="PRK00865.1-3"/>
    <property type="match status" value="1"/>
</dbReference>
<dbReference type="PANTHER" id="PTHR21198">
    <property type="entry name" value="GLUTAMATE RACEMASE"/>
    <property type="match status" value="1"/>
</dbReference>
<dbReference type="PANTHER" id="PTHR21198:SF2">
    <property type="entry name" value="GLUTAMATE RACEMASE"/>
    <property type="match status" value="1"/>
</dbReference>
<dbReference type="Pfam" id="PF01177">
    <property type="entry name" value="Asp_Glu_race"/>
    <property type="match status" value="1"/>
</dbReference>
<dbReference type="SUPFAM" id="SSF53681">
    <property type="entry name" value="Aspartate/glutamate racemase"/>
    <property type="match status" value="2"/>
</dbReference>
<dbReference type="PROSITE" id="PS00924">
    <property type="entry name" value="ASP_GLU_RACEMASE_2"/>
    <property type="match status" value="1"/>
</dbReference>
<feature type="chain" id="PRO_1000047625" description="Glutamate racemase">
    <location>
        <begin position="1"/>
        <end position="264"/>
    </location>
</feature>
<feature type="active site" description="Proton donor/acceptor" evidence="1">
    <location>
        <position position="73"/>
    </location>
</feature>
<feature type="active site" description="Proton donor/acceptor" evidence="1">
    <location>
        <position position="183"/>
    </location>
</feature>
<feature type="binding site" evidence="1">
    <location>
        <begin position="10"/>
        <end position="11"/>
    </location>
    <ligand>
        <name>substrate</name>
    </ligand>
</feature>
<feature type="binding site" evidence="1">
    <location>
        <begin position="42"/>
        <end position="43"/>
    </location>
    <ligand>
        <name>substrate</name>
    </ligand>
</feature>
<feature type="binding site" evidence="1">
    <location>
        <begin position="74"/>
        <end position="75"/>
    </location>
    <ligand>
        <name>substrate</name>
    </ligand>
</feature>
<feature type="binding site" evidence="1">
    <location>
        <begin position="184"/>
        <end position="185"/>
    </location>
    <ligand>
        <name>substrate</name>
    </ligand>
</feature>
<evidence type="ECO:0000255" key="1">
    <source>
        <dbReference type="HAMAP-Rule" id="MF_00258"/>
    </source>
</evidence>
<keyword id="KW-0133">Cell shape</keyword>
<keyword id="KW-0961">Cell wall biogenesis/degradation</keyword>
<keyword id="KW-0413">Isomerase</keyword>
<keyword id="KW-0573">Peptidoglycan synthesis</keyword>
<accession>Q1J8B4</accession>
<sequence length="264" mass="28992">MDTRPIGFLDSGVGGLTVVCELIRQLPHEKIVYIGDSARAPYGPRPKKQIKEYTWELVNFLLTQNVKMIVFACNTATAVAWEEVKAALDIPVLGVVLPGASAAIKSTTKGQVGVIGTPMTVASDIYRKKIQLLAPSVQVRSLACPKFVPIVESNEMCSSIAKKIVYDSLAPLVGKIDTLVLGCTHYPLLRPIIQNVMGPSVKLIDSGAECVRDISVLLNYFDINGNYHQKAVEHRFFTTANSEIFQEIASIWLKQKINVEHVTL</sequence>
<protein>
    <recommendedName>
        <fullName evidence="1">Glutamate racemase</fullName>
        <ecNumber evidence="1">5.1.1.3</ecNumber>
    </recommendedName>
</protein>
<reference key="1">
    <citation type="journal article" date="2006" name="Proc. Natl. Acad. Sci. U.S.A.">
        <title>Molecular genetic anatomy of inter- and intraserotype variation in the human bacterial pathogen group A Streptococcus.</title>
        <authorList>
            <person name="Beres S.B."/>
            <person name="Richter E.W."/>
            <person name="Nagiec M.J."/>
            <person name="Sumby P."/>
            <person name="Porcella S.F."/>
            <person name="DeLeo F.R."/>
            <person name="Musser J.M."/>
        </authorList>
    </citation>
    <scope>NUCLEOTIDE SEQUENCE [LARGE SCALE GENOMIC DNA]</scope>
    <source>
        <strain>MGAS10750</strain>
    </source>
</reference>
<gene>
    <name evidence="1" type="primary">murI</name>
    <name type="ordered locus">MGAS10750_Spy0297</name>
</gene>
<proteinExistence type="inferred from homology"/>
<organism>
    <name type="scientific">Streptococcus pyogenes serotype M4 (strain MGAS10750)</name>
    <dbReference type="NCBI Taxonomy" id="370554"/>
    <lineage>
        <taxon>Bacteria</taxon>
        <taxon>Bacillati</taxon>
        <taxon>Bacillota</taxon>
        <taxon>Bacilli</taxon>
        <taxon>Lactobacillales</taxon>
        <taxon>Streptococcaceae</taxon>
        <taxon>Streptococcus</taxon>
    </lineage>
</organism>
<name>MURI_STRPF</name>